<proteinExistence type="inferred from homology"/>
<feature type="chain" id="PRO_0000127051" description="Large ribosomal subunit protein eL39">
    <location>
        <begin position="1"/>
        <end position="51"/>
    </location>
</feature>
<gene>
    <name evidence="1" type="primary">rpl39e</name>
    <name type="synonym">rpl39</name>
    <name type="ordered locus">MK1618</name>
</gene>
<organism>
    <name type="scientific">Methanopyrus kandleri (strain AV19 / DSM 6324 / JCM 9639 / NBRC 100938)</name>
    <dbReference type="NCBI Taxonomy" id="190192"/>
    <lineage>
        <taxon>Archaea</taxon>
        <taxon>Methanobacteriati</taxon>
        <taxon>Methanobacteriota</taxon>
        <taxon>Methanomada group</taxon>
        <taxon>Methanopyri</taxon>
        <taxon>Methanopyrales</taxon>
        <taxon>Methanopyraceae</taxon>
        <taxon>Methanopyrus</taxon>
    </lineage>
</organism>
<sequence length="51" mass="6011">MARVKPLGKKLRMAKAIKQNRRVPPWVVAKTGGRVIDNPKRRHWRRSKLKP</sequence>
<keyword id="KW-1185">Reference proteome</keyword>
<keyword id="KW-0687">Ribonucleoprotein</keyword>
<keyword id="KW-0689">Ribosomal protein</keyword>
<evidence type="ECO:0000255" key="1">
    <source>
        <dbReference type="HAMAP-Rule" id="MF_00629"/>
    </source>
</evidence>
<evidence type="ECO:0000305" key="2"/>
<name>RL39_METKA</name>
<accession>Q8TUY3</accession>
<dbReference type="EMBL" id="AE009439">
    <property type="protein sequence ID" value="AAM02831.1"/>
    <property type="molecule type" value="Genomic_DNA"/>
</dbReference>
<dbReference type="SMR" id="Q8TUY3"/>
<dbReference type="FunCoup" id="Q8TUY3">
    <property type="interactions" value="88"/>
</dbReference>
<dbReference type="STRING" id="190192.MK1618"/>
<dbReference type="PaxDb" id="190192-MK1618"/>
<dbReference type="EnsemblBacteria" id="AAM02831">
    <property type="protein sequence ID" value="AAM02831"/>
    <property type="gene ID" value="MK1618"/>
</dbReference>
<dbReference type="KEGG" id="mka:MK1618"/>
<dbReference type="PATRIC" id="fig|190192.8.peg.1781"/>
<dbReference type="HOGENOM" id="CLU_181948_4_0_2"/>
<dbReference type="InParanoid" id="Q8TUY3"/>
<dbReference type="OrthoDB" id="65887at2157"/>
<dbReference type="Proteomes" id="UP000001826">
    <property type="component" value="Chromosome"/>
</dbReference>
<dbReference type="GO" id="GO:1990904">
    <property type="term" value="C:ribonucleoprotein complex"/>
    <property type="evidence" value="ECO:0007669"/>
    <property type="project" value="UniProtKB-KW"/>
</dbReference>
<dbReference type="GO" id="GO:0005840">
    <property type="term" value="C:ribosome"/>
    <property type="evidence" value="ECO:0007669"/>
    <property type="project" value="UniProtKB-KW"/>
</dbReference>
<dbReference type="GO" id="GO:0003735">
    <property type="term" value="F:structural constituent of ribosome"/>
    <property type="evidence" value="ECO:0007669"/>
    <property type="project" value="InterPro"/>
</dbReference>
<dbReference type="GO" id="GO:0006412">
    <property type="term" value="P:translation"/>
    <property type="evidence" value="ECO:0007669"/>
    <property type="project" value="UniProtKB-UniRule"/>
</dbReference>
<dbReference type="FunFam" id="1.10.1620.10:FF:000001">
    <property type="entry name" value="60S ribosomal protein-like L39"/>
    <property type="match status" value="1"/>
</dbReference>
<dbReference type="Gene3D" id="1.10.1620.10">
    <property type="entry name" value="Ribosomal protein L39e"/>
    <property type="match status" value="1"/>
</dbReference>
<dbReference type="HAMAP" id="MF_00629">
    <property type="entry name" value="Ribosomal_eL39"/>
    <property type="match status" value="1"/>
</dbReference>
<dbReference type="InterPro" id="IPR000077">
    <property type="entry name" value="Ribosomal_eL39"/>
</dbReference>
<dbReference type="InterPro" id="IPR020083">
    <property type="entry name" value="Ribosomal_eL39_CS"/>
</dbReference>
<dbReference type="InterPro" id="IPR023626">
    <property type="entry name" value="Ribosomal_eL39_dom_sf"/>
</dbReference>
<dbReference type="NCBIfam" id="NF002316">
    <property type="entry name" value="PRK01242.1"/>
    <property type="match status" value="1"/>
</dbReference>
<dbReference type="Pfam" id="PF00832">
    <property type="entry name" value="Ribosomal_L39"/>
    <property type="match status" value="1"/>
</dbReference>
<dbReference type="SUPFAM" id="SSF48662">
    <property type="entry name" value="Ribosomal protein L39e"/>
    <property type="match status" value="1"/>
</dbReference>
<dbReference type="PROSITE" id="PS00051">
    <property type="entry name" value="RIBOSOMAL_L39E"/>
    <property type="match status" value="1"/>
</dbReference>
<reference key="1">
    <citation type="journal article" date="2002" name="Proc. Natl. Acad. Sci. U.S.A.">
        <title>The complete genome of hyperthermophile Methanopyrus kandleri AV19 and monophyly of archaeal methanogens.</title>
        <authorList>
            <person name="Slesarev A.I."/>
            <person name="Mezhevaya K.V."/>
            <person name="Makarova K.S."/>
            <person name="Polushin N.N."/>
            <person name="Shcherbinina O.V."/>
            <person name="Shakhova V.V."/>
            <person name="Belova G.I."/>
            <person name="Aravind L."/>
            <person name="Natale D.A."/>
            <person name="Rogozin I.B."/>
            <person name="Tatusov R.L."/>
            <person name="Wolf Y.I."/>
            <person name="Stetter K.O."/>
            <person name="Malykh A.G."/>
            <person name="Koonin E.V."/>
            <person name="Kozyavkin S.A."/>
        </authorList>
    </citation>
    <scope>NUCLEOTIDE SEQUENCE [LARGE SCALE GENOMIC DNA]</scope>
    <source>
        <strain>AV19 / DSM 6324 / JCM 9639 / NBRC 100938</strain>
    </source>
</reference>
<comment type="similarity">
    <text evidence="1">Belongs to the eukaryotic ribosomal protein eL39 family.</text>
</comment>
<protein>
    <recommendedName>
        <fullName evidence="1">Large ribosomal subunit protein eL39</fullName>
    </recommendedName>
    <alternativeName>
        <fullName evidence="2">50S ribosomal protein L39e</fullName>
    </alternativeName>
</protein>